<comment type="function">
    <text evidence="1">F(1)F(0) ATP synthase produces ATP from ADP in the presence of a proton or sodium gradient. F-type ATPases consist of two structural domains, F(1) containing the extramembraneous catalytic core and F(0) containing the membrane proton channel, linked together by a central stalk and a peripheral stalk. During catalysis, ATP synthesis in the catalytic domain of F(1) is coupled via a rotary mechanism of the central stalk subunits to proton translocation.</text>
</comment>
<comment type="function">
    <text evidence="1">This protein is part of the stalk that links CF(0) to CF(1). It either transmits conformational changes from CF(0) to CF(1) or is implicated in proton conduction.</text>
</comment>
<comment type="subunit">
    <text evidence="1">F-type ATPases have 2 components, F(1) - the catalytic core - and F(0) - the membrane proton channel. F(1) has five subunits: alpha(3), beta(3), gamma(1), delta(1), epsilon(1). F(0) has three main subunits: a(1), b(2) and c(10-14). The alpha and beta chains form an alternating ring which encloses part of the gamma chain. F(1) is attached to F(0) by a central stalk formed by the gamma and epsilon chains, while a peripheral stalk is formed by the delta and b chains.</text>
</comment>
<comment type="subcellular location">
    <subcellularLocation>
        <location evidence="1">Cell inner membrane</location>
        <topology evidence="1">Peripheral membrane protein</topology>
    </subcellularLocation>
</comment>
<comment type="similarity">
    <text evidence="1">Belongs to the ATPase delta chain family.</text>
</comment>
<reference key="1">
    <citation type="journal article" date="2006" name="Proc. Natl. Acad. Sci. U.S.A.">
        <title>Genome reduction in Leptospira borgpetersenii reflects limited transmission potential.</title>
        <authorList>
            <person name="Bulach D.M."/>
            <person name="Zuerner R.L."/>
            <person name="Wilson P."/>
            <person name="Seemann T."/>
            <person name="McGrath A."/>
            <person name="Cullen P.A."/>
            <person name="Davis J."/>
            <person name="Johnson M."/>
            <person name="Kuczek E."/>
            <person name="Alt D.P."/>
            <person name="Peterson-Burch B."/>
            <person name="Coppel R.L."/>
            <person name="Rood J.I."/>
            <person name="Davies J.K."/>
            <person name="Adler B."/>
        </authorList>
    </citation>
    <scope>NUCLEOTIDE SEQUENCE [LARGE SCALE GENOMIC DNA]</scope>
    <source>
        <strain>L550</strain>
    </source>
</reference>
<feature type="chain" id="PRO_1000184741" description="ATP synthase subunit delta">
    <location>
        <begin position="1"/>
        <end position="186"/>
    </location>
</feature>
<sequence>MNDSGVSKIYASALLGAVNSPEEVEQELGDLVQLLFKEEKIRNFFLSPTVSIEEKENILEKNLRGKILDVTLNFLGVLLNKGRFINLPEIQKRFTVELDKKKGRVRAQIKSYPSLEPAQITKLGSILSEKFKSEFILEVSEDKTLLGGFVVQFNDLKIEKSIASQLGEIKKAMLEKKLPVGAVYEN</sequence>
<organism>
    <name type="scientific">Leptospira borgpetersenii serovar Hardjo-bovis (strain L550)</name>
    <dbReference type="NCBI Taxonomy" id="355276"/>
    <lineage>
        <taxon>Bacteria</taxon>
        <taxon>Pseudomonadati</taxon>
        <taxon>Spirochaetota</taxon>
        <taxon>Spirochaetia</taxon>
        <taxon>Leptospirales</taxon>
        <taxon>Leptospiraceae</taxon>
        <taxon>Leptospira</taxon>
    </lineage>
</organism>
<dbReference type="EMBL" id="CP000348">
    <property type="protein sequence ID" value="ABJ79403.1"/>
    <property type="molecule type" value="Genomic_DNA"/>
</dbReference>
<dbReference type="RefSeq" id="WP_002740769.1">
    <property type="nucleotide sequence ID" value="NC_008508.1"/>
</dbReference>
<dbReference type="SMR" id="Q04ZU2"/>
<dbReference type="KEGG" id="lbl:LBL_1974"/>
<dbReference type="HOGENOM" id="CLU_085114_4_1_12"/>
<dbReference type="GO" id="GO:0005886">
    <property type="term" value="C:plasma membrane"/>
    <property type="evidence" value="ECO:0007669"/>
    <property type="project" value="UniProtKB-SubCell"/>
</dbReference>
<dbReference type="GO" id="GO:0045259">
    <property type="term" value="C:proton-transporting ATP synthase complex"/>
    <property type="evidence" value="ECO:0007669"/>
    <property type="project" value="UniProtKB-KW"/>
</dbReference>
<dbReference type="GO" id="GO:0046933">
    <property type="term" value="F:proton-transporting ATP synthase activity, rotational mechanism"/>
    <property type="evidence" value="ECO:0007669"/>
    <property type="project" value="UniProtKB-UniRule"/>
</dbReference>
<dbReference type="Gene3D" id="1.10.520.20">
    <property type="entry name" value="N-terminal domain of the delta subunit of the F1F0-ATP synthase"/>
    <property type="match status" value="1"/>
</dbReference>
<dbReference type="HAMAP" id="MF_01416">
    <property type="entry name" value="ATP_synth_delta_bact"/>
    <property type="match status" value="1"/>
</dbReference>
<dbReference type="InterPro" id="IPR026015">
    <property type="entry name" value="ATP_synth_OSCP/delta_N_sf"/>
</dbReference>
<dbReference type="InterPro" id="IPR000711">
    <property type="entry name" value="ATPase_OSCP/dsu"/>
</dbReference>
<dbReference type="NCBIfam" id="TIGR01145">
    <property type="entry name" value="ATP_synt_delta"/>
    <property type="match status" value="1"/>
</dbReference>
<dbReference type="NCBIfam" id="NF009969">
    <property type="entry name" value="PRK13434.1"/>
    <property type="match status" value="1"/>
</dbReference>
<dbReference type="PANTHER" id="PTHR11910">
    <property type="entry name" value="ATP SYNTHASE DELTA CHAIN"/>
    <property type="match status" value="1"/>
</dbReference>
<dbReference type="Pfam" id="PF00213">
    <property type="entry name" value="OSCP"/>
    <property type="match status" value="1"/>
</dbReference>
<dbReference type="PRINTS" id="PR00125">
    <property type="entry name" value="ATPASEDELTA"/>
</dbReference>
<dbReference type="SUPFAM" id="SSF47928">
    <property type="entry name" value="N-terminal domain of the delta subunit of the F1F0-ATP synthase"/>
    <property type="match status" value="1"/>
</dbReference>
<gene>
    <name evidence="1" type="primary">atpH</name>
    <name type="ordered locus">LBL_1974</name>
</gene>
<evidence type="ECO:0000255" key="1">
    <source>
        <dbReference type="HAMAP-Rule" id="MF_01416"/>
    </source>
</evidence>
<proteinExistence type="inferred from homology"/>
<accession>Q04ZU2</accession>
<name>ATPD_LEPBL</name>
<keyword id="KW-0066">ATP synthesis</keyword>
<keyword id="KW-0997">Cell inner membrane</keyword>
<keyword id="KW-1003">Cell membrane</keyword>
<keyword id="KW-0139">CF(1)</keyword>
<keyword id="KW-0375">Hydrogen ion transport</keyword>
<keyword id="KW-0406">Ion transport</keyword>
<keyword id="KW-0472">Membrane</keyword>
<keyword id="KW-0813">Transport</keyword>
<protein>
    <recommendedName>
        <fullName evidence="1">ATP synthase subunit delta</fullName>
    </recommendedName>
    <alternativeName>
        <fullName evidence="1">ATP synthase F(1) sector subunit delta</fullName>
    </alternativeName>
    <alternativeName>
        <fullName evidence="1">F-type ATPase subunit delta</fullName>
        <shortName evidence="1">F-ATPase subunit delta</shortName>
    </alternativeName>
</protein>